<protein>
    <recommendedName>
        <fullName evidence="5">Putative tyrosine recombinase XerC</fullName>
    </recommendedName>
</protein>
<dbReference type="EMBL" id="AF521605">
    <property type="protein sequence ID" value="AAM77365.1"/>
    <property type="molecule type" value="Genomic_DNA"/>
</dbReference>
<dbReference type="SMR" id="Q8KRZ2"/>
<dbReference type="GO" id="GO:0005737">
    <property type="term" value="C:cytoplasm"/>
    <property type="evidence" value="ECO:0007669"/>
    <property type="project" value="UniProtKB-SubCell"/>
</dbReference>
<dbReference type="GO" id="GO:0003677">
    <property type="term" value="F:DNA binding"/>
    <property type="evidence" value="ECO:0007669"/>
    <property type="project" value="UniProtKB-KW"/>
</dbReference>
<dbReference type="GO" id="GO:0051301">
    <property type="term" value="P:cell division"/>
    <property type="evidence" value="ECO:0007669"/>
    <property type="project" value="UniProtKB-KW"/>
</dbReference>
<dbReference type="GO" id="GO:0007059">
    <property type="term" value="P:chromosome segregation"/>
    <property type="evidence" value="ECO:0007669"/>
    <property type="project" value="UniProtKB-KW"/>
</dbReference>
<dbReference type="GO" id="GO:0015074">
    <property type="term" value="P:DNA integration"/>
    <property type="evidence" value="ECO:0007669"/>
    <property type="project" value="UniProtKB-KW"/>
</dbReference>
<dbReference type="GO" id="GO:0006310">
    <property type="term" value="P:DNA recombination"/>
    <property type="evidence" value="ECO:0007669"/>
    <property type="project" value="UniProtKB-KW"/>
</dbReference>
<dbReference type="CDD" id="cd00397">
    <property type="entry name" value="DNA_BRE_C"/>
    <property type="match status" value="1"/>
</dbReference>
<dbReference type="Gene3D" id="1.10.150.130">
    <property type="match status" value="1"/>
</dbReference>
<dbReference type="Gene3D" id="1.10.443.10">
    <property type="entry name" value="Intergrase catalytic core"/>
    <property type="match status" value="1"/>
</dbReference>
<dbReference type="InterPro" id="IPR044068">
    <property type="entry name" value="CB"/>
</dbReference>
<dbReference type="InterPro" id="IPR011010">
    <property type="entry name" value="DNA_brk_join_enz"/>
</dbReference>
<dbReference type="InterPro" id="IPR013762">
    <property type="entry name" value="Integrase-like_cat_sf"/>
</dbReference>
<dbReference type="InterPro" id="IPR002104">
    <property type="entry name" value="Integrase_catalytic"/>
</dbReference>
<dbReference type="InterPro" id="IPR010998">
    <property type="entry name" value="Integrase_recombinase_N"/>
</dbReference>
<dbReference type="InterPro" id="IPR050090">
    <property type="entry name" value="Tyrosine_recombinase_XerCD"/>
</dbReference>
<dbReference type="PANTHER" id="PTHR30349">
    <property type="entry name" value="PHAGE INTEGRASE-RELATED"/>
    <property type="match status" value="1"/>
</dbReference>
<dbReference type="PANTHER" id="PTHR30349:SF64">
    <property type="entry name" value="PROPHAGE INTEGRASE INTD-RELATED"/>
    <property type="match status" value="1"/>
</dbReference>
<dbReference type="Pfam" id="PF00589">
    <property type="entry name" value="Phage_integrase"/>
    <property type="match status" value="1"/>
</dbReference>
<dbReference type="SUPFAM" id="SSF56349">
    <property type="entry name" value="DNA breaking-rejoining enzymes"/>
    <property type="match status" value="1"/>
</dbReference>
<dbReference type="PROSITE" id="PS51900">
    <property type="entry name" value="CB"/>
    <property type="match status" value="1"/>
</dbReference>
<dbReference type="PROSITE" id="PS51898">
    <property type="entry name" value="TYR_RECOMBINASE"/>
    <property type="match status" value="1"/>
</dbReference>
<comment type="function">
    <text evidence="1">Site-specific tyrosine recombinase, which acts by catalyzing the cutting and rejoining of the recombining DNA molecules.</text>
</comment>
<comment type="subcellular location">
    <subcellularLocation>
        <location evidence="5">Cytoplasm</location>
    </subcellularLocation>
</comment>
<comment type="miscellaneous">
    <text evidence="5">In contrast to other XerC proteins, it has a much longer C-terminal part.</text>
</comment>
<comment type="similarity">
    <text evidence="5">Belongs to the 'phage' integrase family.</text>
</comment>
<organism>
    <name type="scientific">Pseudomonas syringae</name>
    <dbReference type="NCBI Taxonomy" id="317"/>
    <lineage>
        <taxon>Bacteria</taxon>
        <taxon>Pseudomonadati</taxon>
        <taxon>Pseudomonadota</taxon>
        <taxon>Gammaproteobacteria</taxon>
        <taxon>Pseudomonadales</taxon>
        <taxon>Pseudomonadaceae</taxon>
        <taxon>Pseudomonas</taxon>
    </lineage>
</organism>
<evidence type="ECO:0000250" key="1">
    <source>
        <dbReference type="UniProtKB" id="P0A8P8"/>
    </source>
</evidence>
<evidence type="ECO:0000255" key="2">
    <source>
        <dbReference type="PROSITE-ProRule" id="PRU01246"/>
    </source>
</evidence>
<evidence type="ECO:0000255" key="3">
    <source>
        <dbReference type="PROSITE-ProRule" id="PRU01248"/>
    </source>
</evidence>
<evidence type="ECO:0000256" key="4">
    <source>
        <dbReference type="SAM" id="MobiDB-lite"/>
    </source>
</evidence>
<evidence type="ECO:0000305" key="5"/>
<evidence type="ECO:0000312" key="6">
    <source>
        <dbReference type="EMBL" id="AAM77365.1"/>
    </source>
</evidence>
<keyword id="KW-0131">Cell cycle</keyword>
<keyword id="KW-0132">Cell division</keyword>
<keyword id="KW-0159">Chromosome partition</keyword>
<keyword id="KW-0963">Cytoplasm</keyword>
<keyword id="KW-0229">DNA integration</keyword>
<keyword id="KW-0233">DNA recombination</keyword>
<keyword id="KW-0238">DNA-binding</keyword>
<feature type="chain" id="PRO_0000095317" description="Putative tyrosine recombinase XerC">
    <location>
        <begin position="1"/>
        <end position="473"/>
    </location>
</feature>
<feature type="domain" description="Core-binding (CB)" evidence="3">
    <location>
        <begin position="4"/>
        <end position="82"/>
    </location>
</feature>
<feature type="domain" description="Tyr recombinase" evidence="2">
    <location>
        <begin position="118"/>
        <end position="305"/>
    </location>
</feature>
<feature type="region of interest" description="Disordered" evidence="4">
    <location>
        <begin position="341"/>
        <end position="365"/>
    </location>
</feature>
<feature type="compositionally biased region" description="Polar residues" evidence="4">
    <location>
        <begin position="341"/>
        <end position="352"/>
    </location>
</feature>
<feature type="active site" evidence="2">
    <location>
        <position position="156"/>
    </location>
</feature>
<feature type="active site" evidence="2">
    <location>
        <position position="183"/>
    </location>
</feature>
<feature type="active site" evidence="2">
    <location>
        <position position="256"/>
    </location>
</feature>
<feature type="active site" evidence="2">
    <location>
        <position position="259"/>
    </location>
</feature>
<feature type="active site" evidence="2">
    <location>
        <position position="283"/>
    </location>
</feature>
<feature type="active site" description="O-(3'-phospho-DNA)-tyrosine intermediate" evidence="2">
    <location>
        <position position="292"/>
    </location>
</feature>
<accession>Q8KRZ2</accession>
<gene>
    <name evidence="6" type="primary">xerC</name>
</gene>
<proteinExistence type="inferred from homology"/>
<name>XER_PSESX</name>
<sequence length="473" mass="53949">MKPMTLPELTQEYILTHDLRPDTVKIYRAATKAYVNFFGECLACETTHRDMLEWRRSELARISKRSWNTYSSHLRTVYRYAMEHGLVELKVNPLKDTRVMPTKRPKKTIGNDVIVRARNWLRFLVQEELSTGKRSEITPAWFWLAVFETFYYTGIRLNALLCLRYENVDLGQRLIRVRGETEKTHREFMIPIPDGLMPHLVLVMDTAKKVGFSGTDQVFNINRFSGHYKREYMNSDQVEAMYKKLTNMTGTRMTPHRFRHTIASELMRQPERNIHITKNLLNHSNIATTMEYIEPDYDLMREVMNERGQQQAKINYLVRPIIPKSSGPAAGSAVPRVSLVSGTELQPATTESSEAKKADDTASNPPVAERLELMSTAPLVNVLKSTPVSVHSEPVTSNEAKAQALSLISDAPETEYEFGELEDIARWIRENAAGEMVVQIAAEEDIGTISEGKASIQSPDGYYRIPWSSGSVK</sequence>
<reference key="1">
    <citation type="submission" date="2002-06" db="EMBL/GenBank/DDBJ databases">
        <title>Sequence analysis of the tabtoxin biosynthetic region.</title>
        <authorList>
            <person name="Kinscherf T.G."/>
            <person name="Willis D.K."/>
        </authorList>
    </citation>
    <scope>NUCLEOTIDE SEQUENCE [GENOMIC DNA]</scope>
    <source>
        <strain>BR2R</strain>
    </source>
</reference>